<accession>A1SSR3</accession>
<organism>
    <name type="scientific">Psychromonas ingrahamii (strain DSM 17664 / CCUG 51855 / 37)</name>
    <dbReference type="NCBI Taxonomy" id="357804"/>
    <lineage>
        <taxon>Bacteria</taxon>
        <taxon>Pseudomonadati</taxon>
        <taxon>Pseudomonadota</taxon>
        <taxon>Gammaproteobacteria</taxon>
        <taxon>Alteromonadales</taxon>
        <taxon>Psychromonadaceae</taxon>
        <taxon>Psychromonas</taxon>
    </lineage>
</organism>
<name>SURE_PSYIN</name>
<proteinExistence type="inferred from homology"/>
<gene>
    <name evidence="1" type="primary">surE</name>
    <name type="ordered locus">Ping_0675</name>
</gene>
<feature type="chain" id="PRO_1000007774" description="5'-nucleotidase SurE">
    <location>
        <begin position="1"/>
        <end position="245"/>
    </location>
</feature>
<feature type="binding site" evidence="1">
    <location>
        <position position="8"/>
    </location>
    <ligand>
        <name>a divalent metal cation</name>
        <dbReference type="ChEBI" id="CHEBI:60240"/>
    </ligand>
</feature>
<feature type="binding site" evidence="1">
    <location>
        <position position="9"/>
    </location>
    <ligand>
        <name>a divalent metal cation</name>
        <dbReference type="ChEBI" id="CHEBI:60240"/>
    </ligand>
</feature>
<feature type="binding site" evidence="1">
    <location>
        <position position="39"/>
    </location>
    <ligand>
        <name>a divalent metal cation</name>
        <dbReference type="ChEBI" id="CHEBI:60240"/>
    </ligand>
</feature>
<feature type="binding site" evidence="1">
    <location>
        <position position="91"/>
    </location>
    <ligand>
        <name>a divalent metal cation</name>
        <dbReference type="ChEBI" id="CHEBI:60240"/>
    </ligand>
</feature>
<reference key="1">
    <citation type="journal article" date="2008" name="BMC Genomics">
        <title>Genomics of an extreme psychrophile, Psychromonas ingrahamii.</title>
        <authorList>
            <person name="Riley M."/>
            <person name="Staley J.T."/>
            <person name="Danchin A."/>
            <person name="Wang T.Z."/>
            <person name="Brettin T.S."/>
            <person name="Hauser L.J."/>
            <person name="Land M.L."/>
            <person name="Thompson L.S."/>
        </authorList>
    </citation>
    <scope>NUCLEOTIDE SEQUENCE [LARGE SCALE GENOMIC DNA]</scope>
    <source>
        <strain>DSM 17664 / CCUG 51855 / 37</strain>
    </source>
</reference>
<sequence length="245" mass="26147">MTLLISNDDGVYAPGLNALYHALKDLADVKVVAPDRNHSGASNALTLENPLRLQYLDNGFIAVSGTPTDCVHLALNKICITVPKLVVSGINHGANMGDDVLYSGTVAAAMEGRFLGLPAIAISLAGQTHFESAAFYAKQLVGKLLASPLSTDQVLNVNVPDLPLAQIKGIKITRLGKRHKAEMIEKSVDPRGKEIFWVGPPGKIAEAGDGTDFHAIENGYVSITPLKIDLTATEQLSDLTKWLDK</sequence>
<evidence type="ECO:0000255" key="1">
    <source>
        <dbReference type="HAMAP-Rule" id="MF_00060"/>
    </source>
</evidence>
<protein>
    <recommendedName>
        <fullName evidence="1">5'-nucleotidase SurE</fullName>
        <ecNumber evidence="1">3.1.3.5</ecNumber>
    </recommendedName>
    <alternativeName>
        <fullName evidence="1">Nucleoside 5'-monophosphate phosphohydrolase</fullName>
    </alternativeName>
</protein>
<dbReference type="EC" id="3.1.3.5" evidence="1"/>
<dbReference type="EMBL" id="CP000510">
    <property type="protein sequence ID" value="ABM02528.1"/>
    <property type="molecule type" value="Genomic_DNA"/>
</dbReference>
<dbReference type="SMR" id="A1SSR3"/>
<dbReference type="STRING" id="357804.Ping_0675"/>
<dbReference type="KEGG" id="pin:Ping_0675"/>
<dbReference type="eggNOG" id="COG0496">
    <property type="taxonomic scope" value="Bacteria"/>
</dbReference>
<dbReference type="HOGENOM" id="CLU_045192_1_2_6"/>
<dbReference type="OrthoDB" id="9780815at2"/>
<dbReference type="Proteomes" id="UP000000639">
    <property type="component" value="Chromosome"/>
</dbReference>
<dbReference type="GO" id="GO:0005737">
    <property type="term" value="C:cytoplasm"/>
    <property type="evidence" value="ECO:0007669"/>
    <property type="project" value="UniProtKB-SubCell"/>
</dbReference>
<dbReference type="GO" id="GO:0008254">
    <property type="term" value="F:3'-nucleotidase activity"/>
    <property type="evidence" value="ECO:0007669"/>
    <property type="project" value="TreeGrafter"/>
</dbReference>
<dbReference type="GO" id="GO:0008253">
    <property type="term" value="F:5'-nucleotidase activity"/>
    <property type="evidence" value="ECO:0007669"/>
    <property type="project" value="UniProtKB-UniRule"/>
</dbReference>
<dbReference type="GO" id="GO:0004309">
    <property type="term" value="F:exopolyphosphatase activity"/>
    <property type="evidence" value="ECO:0007669"/>
    <property type="project" value="TreeGrafter"/>
</dbReference>
<dbReference type="GO" id="GO:0046872">
    <property type="term" value="F:metal ion binding"/>
    <property type="evidence" value="ECO:0007669"/>
    <property type="project" value="UniProtKB-UniRule"/>
</dbReference>
<dbReference type="GO" id="GO:0000166">
    <property type="term" value="F:nucleotide binding"/>
    <property type="evidence" value="ECO:0007669"/>
    <property type="project" value="UniProtKB-KW"/>
</dbReference>
<dbReference type="FunFam" id="3.40.1210.10:FF:000001">
    <property type="entry name" value="5'/3'-nucleotidase SurE"/>
    <property type="match status" value="1"/>
</dbReference>
<dbReference type="Gene3D" id="3.40.1210.10">
    <property type="entry name" value="Survival protein SurE-like phosphatase/nucleotidase"/>
    <property type="match status" value="1"/>
</dbReference>
<dbReference type="HAMAP" id="MF_00060">
    <property type="entry name" value="SurE"/>
    <property type="match status" value="1"/>
</dbReference>
<dbReference type="InterPro" id="IPR030048">
    <property type="entry name" value="SurE"/>
</dbReference>
<dbReference type="InterPro" id="IPR002828">
    <property type="entry name" value="SurE-like_Pase/nucleotidase"/>
</dbReference>
<dbReference type="InterPro" id="IPR036523">
    <property type="entry name" value="SurE-like_sf"/>
</dbReference>
<dbReference type="NCBIfam" id="NF001489">
    <property type="entry name" value="PRK00346.1-3"/>
    <property type="match status" value="1"/>
</dbReference>
<dbReference type="NCBIfam" id="NF001490">
    <property type="entry name" value="PRK00346.1-4"/>
    <property type="match status" value="1"/>
</dbReference>
<dbReference type="NCBIfam" id="TIGR00087">
    <property type="entry name" value="surE"/>
    <property type="match status" value="1"/>
</dbReference>
<dbReference type="PANTHER" id="PTHR30457">
    <property type="entry name" value="5'-NUCLEOTIDASE SURE"/>
    <property type="match status" value="1"/>
</dbReference>
<dbReference type="PANTHER" id="PTHR30457:SF12">
    <property type="entry name" value="5'_3'-NUCLEOTIDASE SURE"/>
    <property type="match status" value="1"/>
</dbReference>
<dbReference type="Pfam" id="PF01975">
    <property type="entry name" value="SurE"/>
    <property type="match status" value="1"/>
</dbReference>
<dbReference type="SUPFAM" id="SSF64167">
    <property type="entry name" value="SurE-like"/>
    <property type="match status" value="1"/>
</dbReference>
<keyword id="KW-0963">Cytoplasm</keyword>
<keyword id="KW-0378">Hydrolase</keyword>
<keyword id="KW-0479">Metal-binding</keyword>
<keyword id="KW-0547">Nucleotide-binding</keyword>
<keyword id="KW-1185">Reference proteome</keyword>
<comment type="function">
    <text evidence="1">Nucleotidase that shows phosphatase activity on nucleoside 5'-monophosphates.</text>
</comment>
<comment type="catalytic activity">
    <reaction evidence="1">
        <text>a ribonucleoside 5'-phosphate + H2O = a ribonucleoside + phosphate</text>
        <dbReference type="Rhea" id="RHEA:12484"/>
        <dbReference type="ChEBI" id="CHEBI:15377"/>
        <dbReference type="ChEBI" id="CHEBI:18254"/>
        <dbReference type="ChEBI" id="CHEBI:43474"/>
        <dbReference type="ChEBI" id="CHEBI:58043"/>
        <dbReference type="EC" id="3.1.3.5"/>
    </reaction>
</comment>
<comment type="cofactor">
    <cofactor evidence="1">
        <name>a divalent metal cation</name>
        <dbReference type="ChEBI" id="CHEBI:60240"/>
    </cofactor>
    <text evidence="1">Binds 1 divalent metal cation per subunit.</text>
</comment>
<comment type="subcellular location">
    <subcellularLocation>
        <location evidence="1">Cytoplasm</location>
    </subcellularLocation>
</comment>
<comment type="similarity">
    <text evidence="1">Belongs to the SurE nucleotidase family.</text>
</comment>